<feature type="chain" id="PRO_0000269992" description="Macrolide export ATP-binding/permease protein MacB 1">
    <location>
        <begin position="1"/>
        <end position="649"/>
    </location>
</feature>
<feature type="transmembrane region" description="Helical" evidence="1">
    <location>
        <begin position="274"/>
        <end position="294"/>
    </location>
</feature>
<feature type="transmembrane region" description="Helical" evidence="1">
    <location>
        <begin position="420"/>
        <end position="440"/>
    </location>
</feature>
<feature type="transmembrane region" description="Helical" evidence="1">
    <location>
        <begin position="524"/>
        <end position="544"/>
    </location>
</feature>
<feature type="transmembrane region" description="Helical" evidence="1">
    <location>
        <begin position="578"/>
        <end position="598"/>
    </location>
</feature>
<feature type="transmembrane region" description="Helical" evidence="1">
    <location>
        <begin position="608"/>
        <end position="628"/>
    </location>
</feature>
<feature type="domain" description="ABC transporter" evidence="1">
    <location>
        <begin position="5"/>
        <end position="243"/>
    </location>
</feature>
<feature type="binding site" evidence="1">
    <location>
        <begin position="41"/>
        <end position="48"/>
    </location>
    <ligand>
        <name>ATP</name>
        <dbReference type="ChEBI" id="CHEBI:30616"/>
    </ligand>
</feature>
<accession>Q66CL2</accession>
<keyword id="KW-0046">Antibiotic resistance</keyword>
<keyword id="KW-0067">ATP-binding</keyword>
<keyword id="KW-0997">Cell inner membrane</keyword>
<keyword id="KW-1003">Cell membrane</keyword>
<keyword id="KW-0472">Membrane</keyword>
<keyword id="KW-0547">Nucleotide-binding</keyword>
<keyword id="KW-1278">Translocase</keyword>
<keyword id="KW-0812">Transmembrane</keyword>
<keyword id="KW-1133">Transmembrane helix</keyword>
<keyword id="KW-0813">Transport</keyword>
<organism>
    <name type="scientific">Yersinia pseudotuberculosis serotype I (strain IP32953)</name>
    <dbReference type="NCBI Taxonomy" id="273123"/>
    <lineage>
        <taxon>Bacteria</taxon>
        <taxon>Pseudomonadati</taxon>
        <taxon>Pseudomonadota</taxon>
        <taxon>Gammaproteobacteria</taxon>
        <taxon>Enterobacterales</taxon>
        <taxon>Yersiniaceae</taxon>
        <taxon>Yersinia</taxon>
    </lineage>
</organism>
<evidence type="ECO:0000255" key="1">
    <source>
        <dbReference type="HAMAP-Rule" id="MF_01720"/>
    </source>
</evidence>
<dbReference type="EC" id="7.6.2.-" evidence="1"/>
<dbReference type="EMBL" id="BX936398">
    <property type="protein sequence ID" value="CAH20631.1"/>
    <property type="molecule type" value="Genomic_DNA"/>
</dbReference>
<dbReference type="SMR" id="Q66CL2"/>
<dbReference type="KEGG" id="ypo:BZ17_1128"/>
<dbReference type="KEGG" id="yps:YPTB1391"/>
<dbReference type="PATRIC" id="fig|273123.14.peg.1199"/>
<dbReference type="Proteomes" id="UP000001011">
    <property type="component" value="Chromosome"/>
</dbReference>
<dbReference type="GO" id="GO:0005886">
    <property type="term" value="C:plasma membrane"/>
    <property type="evidence" value="ECO:0007669"/>
    <property type="project" value="UniProtKB-SubCell"/>
</dbReference>
<dbReference type="GO" id="GO:0005524">
    <property type="term" value="F:ATP binding"/>
    <property type="evidence" value="ECO:0007669"/>
    <property type="project" value="UniProtKB-KW"/>
</dbReference>
<dbReference type="GO" id="GO:0016887">
    <property type="term" value="F:ATP hydrolysis activity"/>
    <property type="evidence" value="ECO:0007669"/>
    <property type="project" value="InterPro"/>
</dbReference>
<dbReference type="GO" id="GO:0022857">
    <property type="term" value="F:transmembrane transporter activity"/>
    <property type="evidence" value="ECO:0007669"/>
    <property type="project" value="TreeGrafter"/>
</dbReference>
<dbReference type="GO" id="GO:0046677">
    <property type="term" value="P:response to antibiotic"/>
    <property type="evidence" value="ECO:0007669"/>
    <property type="project" value="UniProtKB-KW"/>
</dbReference>
<dbReference type="CDD" id="cd03255">
    <property type="entry name" value="ABC_MJ0796_LolCDE_FtsE"/>
    <property type="match status" value="1"/>
</dbReference>
<dbReference type="FunFam" id="3.40.50.300:FF:000032">
    <property type="entry name" value="Export ABC transporter ATP-binding protein"/>
    <property type="match status" value="1"/>
</dbReference>
<dbReference type="Gene3D" id="3.40.50.300">
    <property type="entry name" value="P-loop containing nucleotide triphosphate hydrolases"/>
    <property type="match status" value="1"/>
</dbReference>
<dbReference type="InterPro" id="IPR003593">
    <property type="entry name" value="AAA+_ATPase"/>
</dbReference>
<dbReference type="InterPro" id="IPR003838">
    <property type="entry name" value="ABC3_permease_C"/>
</dbReference>
<dbReference type="InterPro" id="IPR003439">
    <property type="entry name" value="ABC_transporter-like_ATP-bd"/>
</dbReference>
<dbReference type="InterPro" id="IPR017871">
    <property type="entry name" value="ABC_transporter-like_CS"/>
</dbReference>
<dbReference type="InterPro" id="IPR017911">
    <property type="entry name" value="MacB-like_ATP-bd"/>
</dbReference>
<dbReference type="InterPro" id="IPR025857">
    <property type="entry name" value="MacB_PCD"/>
</dbReference>
<dbReference type="InterPro" id="IPR050250">
    <property type="entry name" value="Macrolide_Exporter_MacB"/>
</dbReference>
<dbReference type="InterPro" id="IPR027417">
    <property type="entry name" value="P-loop_NTPase"/>
</dbReference>
<dbReference type="NCBIfam" id="NF007826">
    <property type="entry name" value="PRK10535.1"/>
    <property type="match status" value="1"/>
</dbReference>
<dbReference type="PANTHER" id="PTHR30572:SF7">
    <property type="entry name" value="MACROLIDE EXPORT ATP-BINDING_PERMEASE PROTEIN MACB"/>
    <property type="match status" value="1"/>
</dbReference>
<dbReference type="PANTHER" id="PTHR30572">
    <property type="entry name" value="MEMBRANE COMPONENT OF TRANSPORTER-RELATED"/>
    <property type="match status" value="1"/>
</dbReference>
<dbReference type="Pfam" id="PF00005">
    <property type="entry name" value="ABC_tran"/>
    <property type="match status" value="1"/>
</dbReference>
<dbReference type="Pfam" id="PF02687">
    <property type="entry name" value="FtsX"/>
    <property type="match status" value="1"/>
</dbReference>
<dbReference type="Pfam" id="PF12704">
    <property type="entry name" value="MacB_PCD"/>
    <property type="match status" value="1"/>
</dbReference>
<dbReference type="SMART" id="SM00382">
    <property type="entry name" value="AAA"/>
    <property type="match status" value="1"/>
</dbReference>
<dbReference type="SUPFAM" id="SSF52540">
    <property type="entry name" value="P-loop containing nucleoside triphosphate hydrolases"/>
    <property type="match status" value="1"/>
</dbReference>
<dbReference type="PROSITE" id="PS00211">
    <property type="entry name" value="ABC_TRANSPORTER_1"/>
    <property type="match status" value="1"/>
</dbReference>
<dbReference type="PROSITE" id="PS50893">
    <property type="entry name" value="ABC_TRANSPORTER_2"/>
    <property type="match status" value="1"/>
</dbReference>
<dbReference type="PROSITE" id="PS51267">
    <property type="entry name" value="MACB"/>
    <property type="match status" value="1"/>
</dbReference>
<comment type="function">
    <text evidence="1">Part of the tripartite efflux system MacAB-TolC. MacB is a non-canonical ABC transporter that contains transmembrane domains (TMD), which form a pore in the inner membrane, and an ATP-binding domain (NBD), which is responsible for energy generation. Confers resistance against macrolides.</text>
</comment>
<comment type="subunit">
    <text evidence="1">Homodimer. Part of the tripartite efflux system MacAB-TolC, which is composed of an inner membrane transporter, MacB, a periplasmic membrane fusion protein, MacA, and an outer membrane component, TolC. The complex forms a large protein conduit and can translocate molecules across both the inner and outer membranes. Interacts with MacA.</text>
</comment>
<comment type="subcellular location">
    <subcellularLocation>
        <location evidence="1">Cell inner membrane</location>
        <topology evidence="1">Multi-pass membrane protein</topology>
    </subcellularLocation>
</comment>
<comment type="similarity">
    <text evidence="1">Belongs to the ABC transporter superfamily. Macrolide exporter (TC 3.A.1.122) family.</text>
</comment>
<name>MACB1_YERPS</name>
<proteinExistence type="inferred from homology"/>
<sequence>MAALLELEGIRRSYQSGEEIVDVLQDVSLTINAGELVAIIGASGSGKSTLMNILGCLDKPSAGIYRVAGQNVDELDDDALAALRREHFGFIFQRYHLLPHLSAAHNVEVPAVYAGLGKHERRERANMLLTRLGLGDRVSYQPNQLSGGQQQRVSIARALMNGGQVILADEPTGALDSHSSVEVMAILKQLQQQGHTVIIVTHDPTVAAQAERVIEIKDGRIMADSGSKNEPVVAAAELMSLTPAAPSWQQLVGRFREALLMAWRAMSANKMRTALTMLGIIIGIASVVSILVVGDAAKQLVLADIRAIGTNTIDIYPGKDFGDDDPSTRQALVHDDMAALKAQSYVSAVSPSIGGSMRLRFGNIDVAASVLGVSDEYFRVFGMAMEQGAPITREQVERQAQTVVIDLNTQRRLFPHMKDVVGQVILVGNMPATVVGVVAEKKSMFGSNKALRVWVPYSTMANRLMGRSYFDSITIRIKEGYSSKEAEQQLVRLLTLRHGKKDIFTYNMDSLLQTAEKTTQTMQLFLTLVAVISLVVGGIGVMNIMLVSVTERTREIGIRMAVGARSSDVMQQFLIEAVLVCLIGGALGISLSFAIGLIVEMFLPNWRIAFPPMALFSAFLCSTVIGVVFGYLPARSAARLNPIDALARE</sequence>
<reference key="1">
    <citation type="journal article" date="2004" name="Proc. Natl. Acad. Sci. U.S.A.">
        <title>Insights into the evolution of Yersinia pestis through whole-genome comparison with Yersinia pseudotuberculosis.</title>
        <authorList>
            <person name="Chain P.S.G."/>
            <person name="Carniel E."/>
            <person name="Larimer F.W."/>
            <person name="Lamerdin J."/>
            <person name="Stoutland P.O."/>
            <person name="Regala W.M."/>
            <person name="Georgescu A.M."/>
            <person name="Vergez L.M."/>
            <person name="Land M.L."/>
            <person name="Motin V.L."/>
            <person name="Brubaker R.R."/>
            <person name="Fowler J."/>
            <person name="Hinnebusch J."/>
            <person name="Marceau M."/>
            <person name="Medigue C."/>
            <person name="Simonet M."/>
            <person name="Chenal-Francisque V."/>
            <person name="Souza B."/>
            <person name="Dacheux D."/>
            <person name="Elliott J.M."/>
            <person name="Derbise A."/>
            <person name="Hauser L.J."/>
            <person name="Garcia E."/>
        </authorList>
    </citation>
    <scope>NUCLEOTIDE SEQUENCE [LARGE SCALE GENOMIC DNA]</scope>
    <source>
        <strain>IP32953</strain>
    </source>
</reference>
<protein>
    <recommendedName>
        <fullName evidence="1">Macrolide export ATP-binding/permease protein MacB 1</fullName>
        <ecNumber evidence="1">7.6.2.-</ecNumber>
    </recommendedName>
</protein>
<gene>
    <name evidence="1" type="primary">macB1</name>
    <name type="ordered locus">YPTB1391</name>
</gene>